<comment type="function">
    <text evidence="1">Cytoskeletal protein that is involved in cell-shape control through regulation of the length of the long axis.</text>
</comment>
<comment type="subcellular location">
    <subcellularLocation>
        <location evidence="1">Cell inner membrane</location>
        <topology evidence="1">Single-pass type II membrane protein</topology>
    </subcellularLocation>
    <text evidence="1">Forms helical filaments along the long axis of the cell.</text>
</comment>
<comment type="domain">
    <text evidence="1">The helix-turn-helix (HTH) motif in the cytoplasmic domain of the N-terminus is involved in the formation of spirals to maintain the rigid rod shape. As this protein is anchored in the cytoplasmic membrane, the HTH motif may contribute to protein-protein interactions to form the RodZ helix, which is localized beneath the cytoplasmic membrane. The C-terminal domain may be critical for determination of the rod shape by probably interacting with enzymes required for synthesis of the peptidoglycan layer, including PBPs in the periplasm.</text>
</comment>
<comment type="similarity">
    <text evidence="1">Belongs to the RodZ family.</text>
</comment>
<feature type="chain" id="PRO_0000361874" description="Cytoskeleton protein RodZ">
    <location>
        <begin position="1"/>
        <end position="362"/>
    </location>
</feature>
<feature type="topological domain" description="Cytoplasmic" evidence="1">
    <location>
        <begin position="1"/>
        <end position="111"/>
    </location>
</feature>
<feature type="transmembrane region" description="Helical; Signal-anchor for type II membrane protein" evidence="1">
    <location>
        <begin position="112"/>
        <end position="132"/>
    </location>
</feature>
<feature type="topological domain" description="Periplasmic" evidence="1">
    <location>
        <begin position="133"/>
        <end position="362"/>
    </location>
</feature>
<feature type="domain" description="HTH cro/C1-type" evidence="1">
    <location>
        <begin position="19"/>
        <end position="79"/>
    </location>
</feature>
<feature type="DNA-binding region" description="H-T-H motif" evidence="1">
    <location>
        <begin position="30"/>
        <end position="49"/>
    </location>
</feature>
<feature type="region of interest" description="Disordered" evidence="2">
    <location>
        <begin position="151"/>
        <end position="277"/>
    </location>
</feature>
<feature type="compositionally biased region" description="Low complexity" evidence="2">
    <location>
        <begin position="193"/>
        <end position="221"/>
    </location>
</feature>
<feature type="compositionally biased region" description="Polar residues" evidence="2">
    <location>
        <begin position="223"/>
        <end position="242"/>
    </location>
</feature>
<feature type="compositionally biased region" description="Low complexity" evidence="2">
    <location>
        <begin position="246"/>
        <end position="259"/>
    </location>
</feature>
<keyword id="KW-0997">Cell inner membrane</keyword>
<keyword id="KW-1003">Cell membrane</keyword>
<keyword id="KW-0133">Cell shape</keyword>
<keyword id="KW-0238">DNA-binding</keyword>
<keyword id="KW-0472">Membrane</keyword>
<keyword id="KW-0735">Signal-anchor</keyword>
<keyword id="KW-0812">Transmembrane</keyword>
<keyword id="KW-1133">Transmembrane helix</keyword>
<dbReference type="EMBL" id="BX936398">
    <property type="protein sequence ID" value="CAH22080.1"/>
    <property type="molecule type" value="Genomic_DNA"/>
</dbReference>
<dbReference type="RefSeq" id="WP_011192802.1">
    <property type="nucleotide sequence ID" value="NC_006155.1"/>
</dbReference>
<dbReference type="SMR" id="Q667Z8"/>
<dbReference type="GeneID" id="49785148"/>
<dbReference type="KEGG" id="ypo:BZ17_3788"/>
<dbReference type="KEGG" id="yps:YPTB2842"/>
<dbReference type="PATRIC" id="fig|273123.14.peg.3974"/>
<dbReference type="Proteomes" id="UP000001011">
    <property type="component" value="Chromosome"/>
</dbReference>
<dbReference type="GO" id="GO:0005886">
    <property type="term" value="C:plasma membrane"/>
    <property type="evidence" value="ECO:0007669"/>
    <property type="project" value="UniProtKB-SubCell"/>
</dbReference>
<dbReference type="GO" id="GO:0003677">
    <property type="term" value="F:DNA binding"/>
    <property type="evidence" value="ECO:0007669"/>
    <property type="project" value="UniProtKB-KW"/>
</dbReference>
<dbReference type="GO" id="GO:0008360">
    <property type="term" value="P:regulation of cell shape"/>
    <property type="evidence" value="ECO:0007669"/>
    <property type="project" value="UniProtKB-UniRule"/>
</dbReference>
<dbReference type="CDD" id="cd00093">
    <property type="entry name" value="HTH_XRE"/>
    <property type="match status" value="1"/>
</dbReference>
<dbReference type="Gene3D" id="1.10.260.40">
    <property type="entry name" value="lambda repressor-like DNA-binding domains"/>
    <property type="match status" value="1"/>
</dbReference>
<dbReference type="HAMAP" id="MF_02017">
    <property type="entry name" value="RodZ"/>
    <property type="match status" value="1"/>
</dbReference>
<dbReference type="InterPro" id="IPR050400">
    <property type="entry name" value="Bact_Cytoskel_RodZ"/>
</dbReference>
<dbReference type="InterPro" id="IPR001387">
    <property type="entry name" value="Cro/C1-type_HTH"/>
</dbReference>
<dbReference type="InterPro" id="IPR010982">
    <property type="entry name" value="Lambda_DNA-bd_dom_sf"/>
</dbReference>
<dbReference type="InterPro" id="IPR023690">
    <property type="entry name" value="RodZ"/>
</dbReference>
<dbReference type="InterPro" id="IPR025194">
    <property type="entry name" value="RodZ-like_C"/>
</dbReference>
<dbReference type="NCBIfam" id="NF008109">
    <property type="entry name" value="PRK10856.1"/>
    <property type="match status" value="1"/>
</dbReference>
<dbReference type="PANTHER" id="PTHR34475">
    <property type="match status" value="1"/>
</dbReference>
<dbReference type="PANTHER" id="PTHR34475:SF1">
    <property type="entry name" value="CYTOSKELETON PROTEIN RODZ"/>
    <property type="match status" value="1"/>
</dbReference>
<dbReference type="Pfam" id="PF13413">
    <property type="entry name" value="HTH_25"/>
    <property type="match status" value="1"/>
</dbReference>
<dbReference type="Pfam" id="PF13464">
    <property type="entry name" value="RodZ_C"/>
    <property type="match status" value="1"/>
</dbReference>
<dbReference type="SMART" id="SM00530">
    <property type="entry name" value="HTH_XRE"/>
    <property type="match status" value="1"/>
</dbReference>
<dbReference type="SUPFAM" id="SSF47413">
    <property type="entry name" value="lambda repressor-like DNA-binding domains"/>
    <property type="match status" value="1"/>
</dbReference>
<dbReference type="PROSITE" id="PS50943">
    <property type="entry name" value="HTH_CROC1"/>
    <property type="match status" value="1"/>
</dbReference>
<proteinExistence type="inferred from homology"/>
<sequence length="362" mass="38058">MNTEASQDQTVTETPGVRLRQARESLGLTQQTVAERLCLKVSTIRDIEEDNAQANLASTFHRGYIRSYAKLVHLPEDELLPILEKQAPVRAAKVAPMQSFSLGKKHKKRDGWLMSFTWLIVLVVLGLTGAWWWQNHQAQQAEIANMVDQSSAQLSQNGGQPVPLTDDNSDAIAPTDAPAPVANGQPVPLTNHSTSAVTNSATTSSATTSSVPTTSSVPKTTLVPKTNSTEPVDTANTNTTMHQEGAASAAVSPSQVPQPGLSTGPSPLPTADAGVSGSTSSVGALVMNFTADCWLQVVDATGKTLFSGIQKGGAVLNLAGKAPYKLTIGAPGALTISYQGNPVDLSKFIKANRVARLTVGVE</sequence>
<organism>
    <name type="scientific">Yersinia pseudotuberculosis serotype I (strain IP32953)</name>
    <dbReference type="NCBI Taxonomy" id="273123"/>
    <lineage>
        <taxon>Bacteria</taxon>
        <taxon>Pseudomonadati</taxon>
        <taxon>Pseudomonadota</taxon>
        <taxon>Gammaproteobacteria</taxon>
        <taxon>Enterobacterales</taxon>
        <taxon>Yersiniaceae</taxon>
        <taxon>Yersinia</taxon>
    </lineage>
</organism>
<protein>
    <recommendedName>
        <fullName evidence="1">Cytoskeleton protein RodZ</fullName>
    </recommendedName>
</protein>
<evidence type="ECO:0000255" key="1">
    <source>
        <dbReference type="HAMAP-Rule" id="MF_02017"/>
    </source>
</evidence>
<evidence type="ECO:0000256" key="2">
    <source>
        <dbReference type="SAM" id="MobiDB-lite"/>
    </source>
</evidence>
<accession>Q667Z8</accession>
<reference key="1">
    <citation type="journal article" date="2004" name="Proc. Natl. Acad. Sci. U.S.A.">
        <title>Insights into the evolution of Yersinia pestis through whole-genome comparison with Yersinia pseudotuberculosis.</title>
        <authorList>
            <person name="Chain P.S.G."/>
            <person name="Carniel E."/>
            <person name="Larimer F.W."/>
            <person name="Lamerdin J."/>
            <person name="Stoutland P.O."/>
            <person name="Regala W.M."/>
            <person name="Georgescu A.M."/>
            <person name="Vergez L.M."/>
            <person name="Land M.L."/>
            <person name="Motin V.L."/>
            <person name="Brubaker R.R."/>
            <person name="Fowler J."/>
            <person name="Hinnebusch J."/>
            <person name="Marceau M."/>
            <person name="Medigue C."/>
            <person name="Simonet M."/>
            <person name="Chenal-Francisque V."/>
            <person name="Souza B."/>
            <person name="Dacheux D."/>
            <person name="Elliott J.M."/>
            <person name="Derbise A."/>
            <person name="Hauser L.J."/>
            <person name="Garcia E."/>
        </authorList>
    </citation>
    <scope>NUCLEOTIDE SEQUENCE [LARGE SCALE GENOMIC DNA]</scope>
    <source>
        <strain>IP32953</strain>
    </source>
</reference>
<name>RODZ_YERPS</name>
<gene>
    <name evidence="1" type="primary">rodZ</name>
    <name type="ordered locus">YPTB2842</name>
</gene>